<name>DNAK_BACSU</name>
<protein>
    <recommendedName>
        <fullName>Chaperone protein DnaK</fullName>
    </recommendedName>
    <alternativeName>
        <fullName>HSP70</fullName>
    </alternativeName>
    <alternativeName>
        <fullName>Heat shock 70 kDa protein</fullName>
    </alternativeName>
    <alternativeName>
        <fullName>Heat shock protein 70</fullName>
    </alternativeName>
</protein>
<organism>
    <name type="scientific">Bacillus subtilis (strain 168)</name>
    <dbReference type="NCBI Taxonomy" id="224308"/>
    <lineage>
        <taxon>Bacteria</taxon>
        <taxon>Bacillati</taxon>
        <taxon>Bacillota</taxon>
        <taxon>Bacilli</taxon>
        <taxon>Bacillales</taxon>
        <taxon>Bacillaceae</taxon>
        <taxon>Bacillus</taxon>
    </lineage>
</organism>
<proteinExistence type="evidence at protein level"/>
<comment type="function">
    <text evidence="1">Acts as a chaperone.</text>
</comment>
<comment type="subcellular location">
    <subcellularLocation>
        <location evidence="3">Cytoplasm</location>
    </subcellularLocation>
    <subcellularLocation>
        <location evidence="3">Secreted</location>
    </subcellularLocation>
    <text evidence="3">Present in the cytoplasm early in growth, as cells become stationary protein also accumulates in the medium; secreted protein is not processed (PubMed:21856851).</text>
</comment>
<comment type="induction">
    <text>By heat shock.</text>
</comment>
<comment type="similarity">
    <text evidence="5">Belongs to the heat shock protein 70 family.</text>
</comment>
<reference key="1">
    <citation type="journal article" date="1990" name="Nucleic Acids Res.">
        <title>Complete nucleotide sequence of the Bacillus subtilis dnaK gene.</title>
        <authorList>
            <person name="Wetzstein M."/>
            <person name="Schumann W."/>
        </authorList>
    </citation>
    <scope>NUCLEOTIDE SEQUENCE [GENOMIC DNA]</scope>
    <source>
        <strain>168 / MB11</strain>
    </source>
</reference>
<reference key="2">
    <citation type="journal article" date="1992" name="J. Bacteriol.">
        <title>Cloning, sequencing, and molecular analysis of the dnaK locus from Bacillus subtilis.</title>
        <authorList>
            <person name="Wetzstein M."/>
            <person name="Voelker U."/>
            <person name="Dedio J."/>
            <person name="Loebau S."/>
            <person name="Zuber U."/>
            <person name="Schiesswohl M."/>
            <person name="Herget C."/>
            <person name="Hecker M."/>
            <person name="Schumann W."/>
        </authorList>
    </citation>
    <scope>NUCLEOTIDE SEQUENCE [GENOMIC DNA]</scope>
    <source>
        <strain>168 / MB11</strain>
    </source>
</reference>
<reference key="3">
    <citation type="journal article" date="1996" name="Microbiology">
        <title>Systematic sequencing of the 283 kb 210 degrees-232 degrees region of the Bacillus subtilis genome containing the skin element and many sporulation genes.</title>
        <authorList>
            <person name="Mizuno M."/>
            <person name="Masuda S."/>
            <person name="Takemaru K."/>
            <person name="Hosono S."/>
            <person name="Sato T."/>
            <person name="Takeuchi M."/>
            <person name="Kobayashi Y."/>
        </authorList>
    </citation>
    <scope>NUCLEOTIDE SEQUENCE [GENOMIC DNA]</scope>
    <source>
        <strain>168 / JH642</strain>
    </source>
</reference>
<reference key="4">
    <citation type="journal article" date="1997" name="Nature">
        <title>The complete genome sequence of the Gram-positive bacterium Bacillus subtilis.</title>
        <authorList>
            <person name="Kunst F."/>
            <person name="Ogasawara N."/>
            <person name="Moszer I."/>
            <person name="Albertini A.M."/>
            <person name="Alloni G."/>
            <person name="Azevedo V."/>
            <person name="Bertero M.G."/>
            <person name="Bessieres P."/>
            <person name="Bolotin A."/>
            <person name="Borchert S."/>
            <person name="Borriss R."/>
            <person name="Boursier L."/>
            <person name="Brans A."/>
            <person name="Braun M."/>
            <person name="Brignell S.C."/>
            <person name="Bron S."/>
            <person name="Brouillet S."/>
            <person name="Bruschi C.V."/>
            <person name="Caldwell B."/>
            <person name="Capuano V."/>
            <person name="Carter N.M."/>
            <person name="Choi S.-K."/>
            <person name="Codani J.-J."/>
            <person name="Connerton I.F."/>
            <person name="Cummings N.J."/>
            <person name="Daniel R.A."/>
            <person name="Denizot F."/>
            <person name="Devine K.M."/>
            <person name="Duesterhoeft A."/>
            <person name="Ehrlich S.D."/>
            <person name="Emmerson P.T."/>
            <person name="Entian K.-D."/>
            <person name="Errington J."/>
            <person name="Fabret C."/>
            <person name="Ferrari E."/>
            <person name="Foulger D."/>
            <person name="Fritz C."/>
            <person name="Fujita M."/>
            <person name="Fujita Y."/>
            <person name="Fuma S."/>
            <person name="Galizzi A."/>
            <person name="Galleron N."/>
            <person name="Ghim S.-Y."/>
            <person name="Glaser P."/>
            <person name="Goffeau A."/>
            <person name="Golightly E.J."/>
            <person name="Grandi G."/>
            <person name="Guiseppi G."/>
            <person name="Guy B.J."/>
            <person name="Haga K."/>
            <person name="Haiech J."/>
            <person name="Harwood C.R."/>
            <person name="Henaut A."/>
            <person name="Hilbert H."/>
            <person name="Holsappel S."/>
            <person name="Hosono S."/>
            <person name="Hullo M.-F."/>
            <person name="Itaya M."/>
            <person name="Jones L.-M."/>
            <person name="Joris B."/>
            <person name="Karamata D."/>
            <person name="Kasahara Y."/>
            <person name="Klaerr-Blanchard M."/>
            <person name="Klein C."/>
            <person name="Kobayashi Y."/>
            <person name="Koetter P."/>
            <person name="Koningstein G."/>
            <person name="Krogh S."/>
            <person name="Kumano M."/>
            <person name="Kurita K."/>
            <person name="Lapidus A."/>
            <person name="Lardinois S."/>
            <person name="Lauber J."/>
            <person name="Lazarevic V."/>
            <person name="Lee S.-M."/>
            <person name="Levine A."/>
            <person name="Liu H."/>
            <person name="Masuda S."/>
            <person name="Mauel C."/>
            <person name="Medigue C."/>
            <person name="Medina N."/>
            <person name="Mellado R.P."/>
            <person name="Mizuno M."/>
            <person name="Moestl D."/>
            <person name="Nakai S."/>
            <person name="Noback M."/>
            <person name="Noone D."/>
            <person name="O'Reilly M."/>
            <person name="Ogawa K."/>
            <person name="Ogiwara A."/>
            <person name="Oudega B."/>
            <person name="Park S.-H."/>
            <person name="Parro V."/>
            <person name="Pohl T.M."/>
            <person name="Portetelle D."/>
            <person name="Porwollik S."/>
            <person name="Prescott A.M."/>
            <person name="Presecan E."/>
            <person name="Pujic P."/>
            <person name="Purnelle B."/>
            <person name="Rapoport G."/>
            <person name="Rey M."/>
            <person name="Reynolds S."/>
            <person name="Rieger M."/>
            <person name="Rivolta C."/>
            <person name="Rocha E."/>
            <person name="Roche B."/>
            <person name="Rose M."/>
            <person name="Sadaie Y."/>
            <person name="Sato T."/>
            <person name="Scanlan E."/>
            <person name="Schleich S."/>
            <person name="Schroeter R."/>
            <person name="Scoffone F."/>
            <person name="Sekiguchi J."/>
            <person name="Sekowska A."/>
            <person name="Seror S.J."/>
            <person name="Serror P."/>
            <person name="Shin B.-S."/>
            <person name="Soldo B."/>
            <person name="Sorokin A."/>
            <person name="Tacconi E."/>
            <person name="Takagi T."/>
            <person name="Takahashi H."/>
            <person name="Takemaru K."/>
            <person name="Takeuchi M."/>
            <person name="Tamakoshi A."/>
            <person name="Tanaka T."/>
            <person name="Terpstra P."/>
            <person name="Tognoni A."/>
            <person name="Tosato V."/>
            <person name="Uchiyama S."/>
            <person name="Vandenbol M."/>
            <person name="Vannier F."/>
            <person name="Vassarotti A."/>
            <person name="Viari A."/>
            <person name="Wambutt R."/>
            <person name="Wedler E."/>
            <person name="Wedler H."/>
            <person name="Weitzenegger T."/>
            <person name="Winters P."/>
            <person name="Wipat A."/>
            <person name="Yamamoto H."/>
            <person name="Yamane K."/>
            <person name="Yasumoto K."/>
            <person name="Yata K."/>
            <person name="Yoshida K."/>
            <person name="Yoshikawa H.-F."/>
            <person name="Zumstein E."/>
            <person name="Yoshikawa H."/>
            <person name="Danchin A."/>
        </authorList>
    </citation>
    <scope>NUCLEOTIDE SEQUENCE [LARGE SCALE GENOMIC DNA]</scope>
    <source>
        <strain>168</strain>
    </source>
</reference>
<reference key="5">
    <citation type="journal article" date="1990" name="Nucleic Acids Res.">
        <title>Nucleotide sequence of a Bacillus subtilis gene homologous to the grpE gene of E. coli located immediately upstream of the dnaK gene.</title>
        <authorList>
            <person name="Wetzstein M."/>
            <person name="Schumann W."/>
        </authorList>
    </citation>
    <scope>NUCLEOTIDE SEQUENCE [GENOMIC DNA] OF 1-572</scope>
    <source>
        <strain>168 / MB11</strain>
    </source>
</reference>
<reference key="6">
    <citation type="journal article" date="1989" name="Nucleic Acids Res.">
        <title>Nucleotide sequence of a Bacillus subtilis gene homologous to the dnaK gene of Escherichia coli.</title>
        <authorList>
            <person name="Hearne C.M."/>
            <person name="Ellar D.J."/>
        </authorList>
    </citation>
    <scope>NUCLEOTIDE SEQUENCE [GENOMIC DNA] OF 1-214</scope>
    <source>
        <strain>168 / MB24</strain>
    </source>
</reference>
<reference key="7">
    <citation type="journal article" date="1994" name="Microbiology">
        <title>Analysis of the induction of general stress proteins of Bacillus subtilis.</title>
        <authorList>
            <person name="Voelker U."/>
            <person name="Engelmann S."/>
            <person name="Maul B."/>
            <person name="Riethdorf S."/>
            <person name="Voelker A."/>
            <person name="Schmid R."/>
            <person name="Mach H."/>
            <person name="Hecker M."/>
        </authorList>
    </citation>
    <scope>PROTEIN SEQUENCE OF 2-8</scope>
    <source>
        <strain>168 / IS58</strain>
    </source>
</reference>
<reference key="8">
    <citation type="journal article" date="2011" name="J. Bacteriol.">
        <title>Nonclassical protein secretion by Bacillus subtilis in the stationary phase is not due to cell lysis.</title>
        <authorList>
            <person name="Yang C.K."/>
            <person name="Ewis H.E."/>
            <person name="Zhang X."/>
            <person name="Lu C.D."/>
            <person name="Hu H.J."/>
            <person name="Pan Y."/>
            <person name="Abdelal A.T."/>
            <person name="Tai P.C."/>
        </authorList>
    </citation>
    <scope>PROTEIN SEQUENCE OF N-TERMINUS</scope>
    <scope>SUBCELLULAR LOCATION</scope>
    <source>
        <strain>168 / WB600BHM</strain>
    </source>
</reference>
<dbReference type="EMBL" id="X52064">
    <property type="protein sequence ID" value="CAA36286.1"/>
    <property type="molecule type" value="Genomic_DNA"/>
</dbReference>
<dbReference type="EMBL" id="M84964">
    <property type="protein sequence ID" value="AAA22528.1"/>
    <property type="molecule type" value="Genomic_DNA"/>
</dbReference>
<dbReference type="EMBL" id="D84432">
    <property type="protein sequence ID" value="BAA12464.1"/>
    <property type="molecule type" value="Genomic_DNA"/>
</dbReference>
<dbReference type="EMBL" id="AL009126">
    <property type="protein sequence ID" value="CAB14489.1"/>
    <property type="molecule type" value="Genomic_DNA"/>
</dbReference>
<dbReference type="EMBL" id="X51477">
    <property type="protein sequence ID" value="CAA35842.1"/>
    <property type="molecule type" value="Genomic_DNA"/>
</dbReference>
<dbReference type="EMBL" id="X16393">
    <property type="protein sequence ID" value="CAA34429.1"/>
    <property type="molecule type" value="Genomic_DNA"/>
</dbReference>
<dbReference type="PIR" id="S09500">
    <property type="entry name" value="S09500"/>
</dbReference>
<dbReference type="RefSeq" id="NP_390425.1">
    <property type="nucleotide sequence ID" value="NC_000964.3"/>
</dbReference>
<dbReference type="RefSeq" id="WP_004398786.1">
    <property type="nucleotide sequence ID" value="NZ_OZ025638.1"/>
</dbReference>
<dbReference type="SMR" id="P17820"/>
<dbReference type="FunCoup" id="P17820">
    <property type="interactions" value="695"/>
</dbReference>
<dbReference type="IntAct" id="P17820">
    <property type="interactions" value="3"/>
</dbReference>
<dbReference type="MINT" id="P17820"/>
<dbReference type="STRING" id="224308.BSU25470"/>
<dbReference type="jPOST" id="P17820"/>
<dbReference type="PaxDb" id="224308-BSU25470"/>
<dbReference type="EnsemblBacteria" id="CAB14489">
    <property type="protein sequence ID" value="CAB14489"/>
    <property type="gene ID" value="BSU_25470"/>
</dbReference>
<dbReference type="GeneID" id="937849"/>
<dbReference type="KEGG" id="bsu:BSU25470"/>
<dbReference type="PATRIC" id="fig|224308.179.peg.2768"/>
<dbReference type="eggNOG" id="COG0443">
    <property type="taxonomic scope" value="Bacteria"/>
</dbReference>
<dbReference type="InParanoid" id="P17820"/>
<dbReference type="OrthoDB" id="9766019at2"/>
<dbReference type="PhylomeDB" id="P17820"/>
<dbReference type="BioCyc" id="BSUB:BSU25470-MONOMER"/>
<dbReference type="Proteomes" id="UP000001570">
    <property type="component" value="Chromosome"/>
</dbReference>
<dbReference type="GO" id="GO:0005737">
    <property type="term" value="C:cytoplasm"/>
    <property type="evidence" value="ECO:0007669"/>
    <property type="project" value="UniProtKB-SubCell"/>
</dbReference>
<dbReference type="GO" id="GO:0005576">
    <property type="term" value="C:extracellular region"/>
    <property type="evidence" value="ECO:0007669"/>
    <property type="project" value="UniProtKB-SubCell"/>
</dbReference>
<dbReference type="GO" id="GO:0005524">
    <property type="term" value="F:ATP binding"/>
    <property type="evidence" value="ECO:0007669"/>
    <property type="project" value="UniProtKB-UniRule"/>
</dbReference>
<dbReference type="GO" id="GO:0016887">
    <property type="term" value="F:ATP hydrolysis activity"/>
    <property type="evidence" value="ECO:0000318"/>
    <property type="project" value="GO_Central"/>
</dbReference>
<dbReference type="GO" id="GO:0140662">
    <property type="term" value="F:ATP-dependent protein folding chaperone"/>
    <property type="evidence" value="ECO:0007669"/>
    <property type="project" value="InterPro"/>
</dbReference>
<dbReference type="GO" id="GO:0031072">
    <property type="term" value="F:heat shock protein binding"/>
    <property type="evidence" value="ECO:0000318"/>
    <property type="project" value="GO_Central"/>
</dbReference>
<dbReference type="GO" id="GO:0044183">
    <property type="term" value="F:protein folding chaperone"/>
    <property type="evidence" value="ECO:0000318"/>
    <property type="project" value="GO_Central"/>
</dbReference>
<dbReference type="GO" id="GO:0051082">
    <property type="term" value="F:unfolded protein binding"/>
    <property type="evidence" value="ECO:0007669"/>
    <property type="project" value="InterPro"/>
</dbReference>
<dbReference type="GO" id="GO:0051085">
    <property type="term" value="P:chaperone cofactor-dependent protein refolding"/>
    <property type="evidence" value="ECO:0000318"/>
    <property type="project" value="GO_Central"/>
</dbReference>
<dbReference type="GO" id="GO:0042026">
    <property type="term" value="P:protein refolding"/>
    <property type="evidence" value="ECO:0000318"/>
    <property type="project" value="GO_Central"/>
</dbReference>
<dbReference type="CDD" id="cd10234">
    <property type="entry name" value="ASKHA_NBD_HSP70_DnaK-like"/>
    <property type="match status" value="1"/>
</dbReference>
<dbReference type="FunFam" id="2.60.34.10:FF:000014">
    <property type="entry name" value="Chaperone protein DnaK HSP70"/>
    <property type="match status" value="1"/>
</dbReference>
<dbReference type="FunFam" id="1.20.1270.10:FF:000004">
    <property type="entry name" value="Molecular chaperone DnaK"/>
    <property type="match status" value="1"/>
</dbReference>
<dbReference type="FunFam" id="3.30.420.40:FF:000071">
    <property type="entry name" value="Molecular chaperone DnaK"/>
    <property type="match status" value="1"/>
</dbReference>
<dbReference type="FunFam" id="3.90.640.10:FF:000003">
    <property type="entry name" value="Molecular chaperone DnaK"/>
    <property type="match status" value="1"/>
</dbReference>
<dbReference type="Gene3D" id="1.20.1270.10">
    <property type="match status" value="1"/>
</dbReference>
<dbReference type="Gene3D" id="3.30.420.40">
    <property type="match status" value="2"/>
</dbReference>
<dbReference type="Gene3D" id="3.90.640.10">
    <property type="entry name" value="Actin, Chain A, domain 4"/>
    <property type="match status" value="1"/>
</dbReference>
<dbReference type="Gene3D" id="2.60.34.10">
    <property type="entry name" value="Substrate Binding Domain Of DNAk, Chain A, domain 1"/>
    <property type="match status" value="1"/>
</dbReference>
<dbReference type="HAMAP" id="MF_00332">
    <property type="entry name" value="DnaK"/>
    <property type="match status" value="1"/>
</dbReference>
<dbReference type="InterPro" id="IPR043129">
    <property type="entry name" value="ATPase_NBD"/>
</dbReference>
<dbReference type="InterPro" id="IPR012725">
    <property type="entry name" value="Chaperone_DnaK"/>
</dbReference>
<dbReference type="InterPro" id="IPR018181">
    <property type="entry name" value="Heat_shock_70_CS"/>
</dbReference>
<dbReference type="InterPro" id="IPR029048">
    <property type="entry name" value="HSP70_C_sf"/>
</dbReference>
<dbReference type="InterPro" id="IPR029047">
    <property type="entry name" value="HSP70_peptide-bd_sf"/>
</dbReference>
<dbReference type="InterPro" id="IPR013126">
    <property type="entry name" value="Hsp_70_fam"/>
</dbReference>
<dbReference type="NCBIfam" id="NF001413">
    <property type="entry name" value="PRK00290.1"/>
    <property type="match status" value="1"/>
</dbReference>
<dbReference type="NCBIfam" id="TIGR02350">
    <property type="entry name" value="prok_dnaK"/>
    <property type="match status" value="1"/>
</dbReference>
<dbReference type="PANTHER" id="PTHR19375">
    <property type="entry name" value="HEAT SHOCK PROTEIN 70KDA"/>
    <property type="match status" value="1"/>
</dbReference>
<dbReference type="Pfam" id="PF00012">
    <property type="entry name" value="HSP70"/>
    <property type="match status" value="1"/>
</dbReference>
<dbReference type="PRINTS" id="PR00301">
    <property type="entry name" value="HEATSHOCK70"/>
</dbReference>
<dbReference type="SUPFAM" id="SSF53067">
    <property type="entry name" value="Actin-like ATPase domain"/>
    <property type="match status" value="2"/>
</dbReference>
<dbReference type="SUPFAM" id="SSF100934">
    <property type="entry name" value="Heat shock protein 70kD (HSP70), C-terminal subdomain"/>
    <property type="match status" value="1"/>
</dbReference>
<dbReference type="SUPFAM" id="SSF100920">
    <property type="entry name" value="Heat shock protein 70kD (HSP70), peptide-binding domain"/>
    <property type="match status" value="1"/>
</dbReference>
<dbReference type="PROSITE" id="PS00297">
    <property type="entry name" value="HSP70_1"/>
    <property type="match status" value="1"/>
</dbReference>
<dbReference type="PROSITE" id="PS00329">
    <property type="entry name" value="HSP70_2"/>
    <property type="match status" value="1"/>
</dbReference>
<dbReference type="PROSITE" id="PS01036">
    <property type="entry name" value="HSP70_3"/>
    <property type="match status" value="1"/>
</dbReference>
<sequence length="611" mass="66002">MSKVIGIDLGTTNSCVAVLEGGEPKVIANAEGNRTTPSVVAFKNGERQVGEVAKRQSITNPNTIMSIKRHMGTDYKVEIEGKDYTPQEVSAIILQHLKSYAESYLGETVSKAVITVPAYFNDAERQATKDAGKIAGLEVERIINEPTAAALAYGLDKTDEDQTILVYDLGGGTFDVSILELGDGVFEVRSTAGDNRLGGDDFDQVIIDHLVSEFKKENGIDLSKDKMALQRLKDAAEKAKKDLSGVSSTQISLPFITAGEAGPLHLELTLTRAKFEELSSHLVERTMGPVRQALQDAGLSASEIDKVILVGGSTRIPAVQEAIKKETGKEAHKGVNPDEVVALGAAIQGGVITGDVKDVVLLDVTPLSLGIETMGGVFTKLIDRNTTIPTSKSQVFSTAADNQTAVDIHVLQGERPMSADNKTLGRFQLTDIPPAPRGVPQIEVSFDIDKNGIVNVRAKDLGTGKEQNITIKSSSGLSDEEIERMVKEAEENADADAKKKEEIEVRNEADQLVFQTEKTLKDLEGKVDEEQVKKANDAKDALKAAIEKNEFEEIKAKKDELQTIVQELSMKLYEEAAKAQQAQGGANAEGKADDNVVDAEYEEVNDDQNKK</sequence>
<accession>P17820</accession>
<accession>P13343</accession>
<feature type="initiator methionine" description="Removed" evidence="4">
    <location>
        <position position="1"/>
    </location>
</feature>
<feature type="chain" id="PRO_0000078420" description="Chaperone protein DnaK">
    <location>
        <begin position="2"/>
        <end position="611"/>
    </location>
</feature>
<feature type="region of interest" description="Disordered" evidence="2">
    <location>
        <begin position="579"/>
        <end position="611"/>
    </location>
</feature>
<feature type="compositionally biased region" description="Low complexity" evidence="2">
    <location>
        <begin position="579"/>
        <end position="589"/>
    </location>
</feature>
<feature type="compositionally biased region" description="Acidic residues" evidence="2">
    <location>
        <begin position="595"/>
        <end position="611"/>
    </location>
</feature>
<feature type="modified residue" description="Phosphothreonine; by autocatalysis" evidence="1">
    <location>
        <position position="173"/>
    </location>
</feature>
<feature type="sequence conflict" description="In Ref. 6; CAA34429." evidence="5" ref="6">
    <original>S</original>
    <variation>R</variation>
    <location>
        <position position="99"/>
    </location>
</feature>
<feature type="sequence conflict" description="In Ref. 6; CAA34429." evidence="5" ref="6">
    <original>A</original>
    <variation>P</variation>
    <location>
        <position position="150"/>
    </location>
</feature>
<feature type="sequence conflict" description="In Ref. 6; CAA34429." evidence="5" ref="6">
    <original>V</original>
    <variation>L</variation>
    <location>
        <position position="166"/>
    </location>
</feature>
<gene>
    <name type="primary">dnaK</name>
    <name type="ordered locus">BSU25470</name>
</gene>
<evidence type="ECO:0000250" key="1"/>
<evidence type="ECO:0000256" key="2">
    <source>
        <dbReference type="SAM" id="MobiDB-lite"/>
    </source>
</evidence>
<evidence type="ECO:0000269" key="3">
    <source>
    </source>
</evidence>
<evidence type="ECO:0000269" key="4">
    <source>
    </source>
</evidence>
<evidence type="ECO:0000305" key="5"/>
<keyword id="KW-0067">ATP-binding</keyword>
<keyword id="KW-0143">Chaperone</keyword>
<keyword id="KW-0963">Cytoplasm</keyword>
<keyword id="KW-0903">Direct protein sequencing</keyword>
<keyword id="KW-0547">Nucleotide-binding</keyword>
<keyword id="KW-0597">Phosphoprotein</keyword>
<keyword id="KW-1185">Reference proteome</keyword>
<keyword id="KW-0964">Secreted</keyword>
<keyword id="KW-0346">Stress response</keyword>